<name>OLR1_RABIT</name>
<gene>
    <name type="primary">OLR1</name>
    <name type="synonym">LOX1</name>
</gene>
<evidence type="ECO:0000250" key="1"/>
<evidence type="ECO:0000255" key="2"/>
<evidence type="ECO:0000255" key="3">
    <source>
        <dbReference type="PROSITE-ProRule" id="PRU00040"/>
    </source>
</evidence>
<evidence type="ECO:0000256" key="4">
    <source>
        <dbReference type="SAM" id="MobiDB-lite"/>
    </source>
</evidence>
<evidence type="ECO:0000269" key="5">
    <source>
    </source>
</evidence>
<evidence type="ECO:0000305" key="6"/>
<reference key="1">
    <citation type="journal article" date="2000" name="Arterioscler. Thromb. Vasc. Biol.">
        <title>Increased expression of lectin-like oxidized low density lipoprotein receptor-1 in initial atherosclerotic lesions of Watanabe heritable hyperlipidemic rabbits.</title>
        <authorList>
            <person name="Chen M."/>
            <person name="Kakutani M."/>
            <person name="Minami M."/>
            <person name="Kataoka H."/>
            <person name="Kume N."/>
            <person name="Narumiya S."/>
            <person name="Kita T."/>
            <person name="Masaki T."/>
            <person name="Sawamura T."/>
        </authorList>
    </citation>
    <scope>NUCLEOTIDE SEQUENCE [MRNA]</scope>
    <scope>INDUCTION</scope>
    <source>
        <tissue>Placenta</tissue>
    </source>
</reference>
<proteinExistence type="evidence at transcript level"/>
<comment type="function">
    <text evidence="1">Receptor that mediates the recognition, internalization and degradation of oxidatively modified low density lipoprotein (oxLDL) by vascular endothelial cells. OxLDL is a marker of atherosclerosis that induces vascular endothelial cell activation and dysfunction, resulting in pro-inflammatory responses, pro-oxidative conditions and apoptosis. Its association with oxLDL induces the activation of NF-kappa-B through an increased production of intracellular reactive oxygen and a variety of pro-atherogenic cellular responses including a reduction of nitric oxide (NO) release, monocyte adhesion and apoptosis. In addition to binding oxLDL, it acts as a receptor for the HSP70 protein involved in antigen cross-presentation to naive T-cells in dendritic cells, thereby participating in cell-mediated antigen cross-presentation. Also involved in inflammatory process, by acting as a leukocyte-adhesion molecule at the vascular interface in endotoxin-induced inflammation. Also acts as a receptor for advanced glycation end (AGE) products, activated platelets, monocytes, apoptotic cells and both Gram-negative and Gram-positive bacteria (By similarity).</text>
</comment>
<comment type="subunit">
    <text evidence="1">Homodimer; disulfide-linked. May form a hexamer composed of 3 homodimers. Interacts with HSP70 (By similarity).</text>
</comment>
<comment type="subcellular location">
    <subcellularLocation>
        <location evidence="1">Cell membrane</location>
        <topology evidence="1">Lipid-anchor</topology>
    </subcellularLocation>
    <subcellularLocation>
        <location evidence="1">Cell membrane</location>
        <topology evidence="1">Single-pass type II membrane protein</topology>
    </subcellularLocation>
    <subcellularLocation>
        <location evidence="1">Membrane raft</location>
    </subcellularLocation>
    <subcellularLocation>
        <location evidence="1">Secreted</location>
    </subcellularLocation>
    <text evidence="1">A secreted form also exists. Localization to membrane rafts requires palmitoylation (By similarity).</text>
</comment>
<comment type="induction">
    <text evidence="5">Overexpressed in atherosclerotic lesions.</text>
</comment>
<comment type="domain">
    <text evidence="1">The cytoplasmic region is required for subcellular sorting on the cell surface.</text>
</comment>
<comment type="domain">
    <text evidence="1">The C-type lectin domain mediates the recognition and binding of oxLDL.</text>
</comment>
<comment type="PTM">
    <text evidence="1">N-glycosylated.</text>
</comment>
<comment type="sequence caution" evidence="6">
    <conflict type="erroneous initiation">
        <sequence resource="EMBL-CDS" id="BAA81912"/>
    </conflict>
</comment>
<protein>
    <recommendedName>
        <fullName>Oxidized low-density lipoprotein receptor 1</fullName>
        <shortName>Ox-LDL receptor 1</shortName>
    </recommendedName>
    <alternativeName>
        <fullName>Lectin-like oxidized LDL receptor 1</fullName>
        <shortName>LOX-1</shortName>
        <shortName>Lectin-like oxLDL receptor 1</shortName>
    </alternativeName>
    <alternativeName>
        <fullName>Lectin-type oxidized LDL receptor 1</fullName>
    </alternativeName>
    <component>
        <recommendedName>
            <fullName>Oxidized low-density lipoprotein receptor 1, soluble form</fullName>
        </recommendedName>
    </component>
</protein>
<sequence length="274" mass="31159">MAVDDLKVKPMKDQPDQKSNGKKPKGLRFLSSPWWCPAAVALGVLCLGSLMTIIMLGMQLLQVSDLLKQQQANLTLQENILEGQVLAQQQAEAASQESQRELKEMIETLAKRLDEKSKKQMELNHQYLNLQEALKRMDNFSGPCPEDWLWHGKNCYLFSSGSFNWESSQEKCLSLDAQLLKINSTEDLGFIQQATSHSSFPFWMGLSRRKPDYSWLWEDGSPLMPHLFRFQGAVSQRYPSGTCAYIQKGNVFAENCILVAYSICQKKANLLRSE</sequence>
<feature type="chain" id="PRO_0000017449" description="Oxidized low-density lipoprotein receptor 1">
    <location>
        <begin position="1"/>
        <end position="274"/>
    </location>
</feature>
<feature type="chain" id="PRO_0000017450" description="Oxidized low-density lipoprotein receptor 1, soluble form">
    <location>
        <begin status="unknown"/>
        <end position="274"/>
    </location>
</feature>
<feature type="topological domain" description="Cytoplasmic" evidence="2">
    <location>
        <begin position="1"/>
        <end position="31"/>
    </location>
</feature>
<feature type="transmembrane region" description="Helical; Signal-anchor for type II membrane protein" evidence="2">
    <location>
        <begin position="32"/>
        <end position="54"/>
    </location>
</feature>
<feature type="topological domain" description="Extracellular" evidence="2">
    <location>
        <begin position="55"/>
        <end position="274"/>
    </location>
</feature>
<feature type="domain" description="C-type lectin" evidence="3">
    <location>
        <begin position="151"/>
        <end position="265"/>
    </location>
</feature>
<feature type="region of interest" description="Disordered" evidence="4">
    <location>
        <begin position="1"/>
        <end position="25"/>
    </location>
</feature>
<feature type="region of interest" description="Neck">
    <location>
        <begin position="55"/>
        <end position="150"/>
    </location>
</feature>
<feature type="coiled-coil region" evidence="2">
    <location>
        <begin position="84"/>
        <end position="139"/>
    </location>
</feature>
<feature type="compositionally biased region" description="Basic and acidic residues" evidence="4">
    <location>
        <begin position="1"/>
        <end position="16"/>
    </location>
</feature>
<feature type="lipid moiety-binding region" description="S-palmitoyl cysteine" evidence="1">
    <location>
        <position position="36"/>
    </location>
</feature>
<feature type="lipid moiety-binding region" description="S-palmitoyl cysteine" evidence="1">
    <location>
        <position position="46"/>
    </location>
</feature>
<feature type="glycosylation site" description="N-linked (GlcNAc...) asparagine" evidence="2">
    <location>
        <position position="73"/>
    </location>
</feature>
<feature type="glycosylation site" description="N-linked (GlcNAc...) asparagine" evidence="2">
    <location>
        <position position="139"/>
    </location>
</feature>
<feature type="disulfide bond" evidence="3">
    <location>
        <begin position="144"/>
        <end position="155"/>
    </location>
</feature>
<feature type="disulfide bond" evidence="3">
    <location>
        <begin position="172"/>
        <end position="264"/>
    </location>
</feature>
<feature type="disulfide bond" evidence="3">
    <location>
        <begin position="243"/>
        <end position="256"/>
    </location>
</feature>
<organism>
    <name type="scientific">Oryctolagus cuniculus</name>
    <name type="common">Rabbit</name>
    <dbReference type="NCBI Taxonomy" id="9986"/>
    <lineage>
        <taxon>Eukaryota</taxon>
        <taxon>Metazoa</taxon>
        <taxon>Chordata</taxon>
        <taxon>Craniata</taxon>
        <taxon>Vertebrata</taxon>
        <taxon>Euteleostomi</taxon>
        <taxon>Mammalia</taxon>
        <taxon>Eutheria</taxon>
        <taxon>Euarchontoglires</taxon>
        <taxon>Glires</taxon>
        <taxon>Lagomorpha</taxon>
        <taxon>Leporidae</taxon>
        <taxon>Oryctolagus</taxon>
    </lineage>
</organism>
<accession>Q9XTA8</accession>
<dbReference type="EMBL" id="AB016237">
    <property type="protein sequence ID" value="BAA81912.1"/>
    <property type="status" value="ALT_INIT"/>
    <property type="molecule type" value="mRNA"/>
</dbReference>
<dbReference type="RefSeq" id="NP_001076102.1">
    <property type="nucleotide sequence ID" value="NM_001082633.1"/>
</dbReference>
<dbReference type="SMR" id="Q9XTA8"/>
<dbReference type="FunCoup" id="Q9XTA8">
    <property type="interactions" value="14"/>
</dbReference>
<dbReference type="STRING" id="9986.ENSOCUP00000032202"/>
<dbReference type="GlyCosmos" id="Q9XTA8">
    <property type="glycosylation" value="2 sites, No reported glycans"/>
</dbReference>
<dbReference type="GeneID" id="100009322"/>
<dbReference type="KEGG" id="ocu:100009322"/>
<dbReference type="CTD" id="4973"/>
<dbReference type="eggNOG" id="KOG4297">
    <property type="taxonomic scope" value="Eukaryota"/>
</dbReference>
<dbReference type="InParanoid" id="Q9XTA8"/>
<dbReference type="OrthoDB" id="6133475at2759"/>
<dbReference type="Proteomes" id="UP000001811">
    <property type="component" value="Unplaced"/>
</dbReference>
<dbReference type="GO" id="GO:0005576">
    <property type="term" value="C:extracellular region"/>
    <property type="evidence" value="ECO:0007669"/>
    <property type="project" value="UniProtKB-SubCell"/>
</dbReference>
<dbReference type="GO" id="GO:0045121">
    <property type="term" value="C:membrane raft"/>
    <property type="evidence" value="ECO:0007669"/>
    <property type="project" value="UniProtKB-SubCell"/>
</dbReference>
<dbReference type="GO" id="GO:0005886">
    <property type="term" value="C:plasma membrane"/>
    <property type="evidence" value="ECO:0007669"/>
    <property type="project" value="UniProtKB-SubCell"/>
</dbReference>
<dbReference type="GO" id="GO:0043235">
    <property type="term" value="C:receptor complex"/>
    <property type="evidence" value="ECO:0007669"/>
    <property type="project" value="TreeGrafter"/>
</dbReference>
<dbReference type="GO" id="GO:0030246">
    <property type="term" value="F:carbohydrate binding"/>
    <property type="evidence" value="ECO:0007669"/>
    <property type="project" value="UniProtKB-KW"/>
</dbReference>
<dbReference type="GO" id="GO:0005041">
    <property type="term" value="F:low-density lipoprotein particle receptor activity"/>
    <property type="evidence" value="ECO:0007669"/>
    <property type="project" value="TreeGrafter"/>
</dbReference>
<dbReference type="GO" id="GO:0002376">
    <property type="term" value="P:immune system process"/>
    <property type="evidence" value="ECO:0007669"/>
    <property type="project" value="UniProtKB-KW"/>
</dbReference>
<dbReference type="GO" id="GO:0006954">
    <property type="term" value="P:inflammatory response"/>
    <property type="evidence" value="ECO:0007669"/>
    <property type="project" value="UniProtKB-KW"/>
</dbReference>
<dbReference type="GO" id="GO:0007159">
    <property type="term" value="P:leukocyte cell-cell adhesion"/>
    <property type="evidence" value="ECO:0007669"/>
    <property type="project" value="TreeGrafter"/>
</dbReference>
<dbReference type="GO" id="GO:0042157">
    <property type="term" value="P:lipoprotein metabolic process"/>
    <property type="evidence" value="ECO:0007669"/>
    <property type="project" value="TreeGrafter"/>
</dbReference>
<dbReference type="CDD" id="cd03593">
    <property type="entry name" value="CLECT_NK_receptors_like"/>
    <property type="match status" value="1"/>
</dbReference>
<dbReference type="FunFam" id="3.10.100.10:FF:000079">
    <property type="entry name" value="Oxidized low-density lipoprotein receptor 1"/>
    <property type="match status" value="1"/>
</dbReference>
<dbReference type="Gene3D" id="3.10.100.10">
    <property type="entry name" value="Mannose-Binding Protein A, subunit A"/>
    <property type="match status" value="1"/>
</dbReference>
<dbReference type="InterPro" id="IPR001304">
    <property type="entry name" value="C-type_lectin-like"/>
</dbReference>
<dbReference type="InterPro" id="IPR016186">
    <property type="entry name" value="C-type_lectin-like/link_sf"/>
</dbReference>
<dbReference type="InterPro" id="IPR016187">
    <property type="entry name" value="CTDL_fold"/>
</dbReference>
<dbReference type="InterPro" id="IPR013600">
    <property type="entry name" value="Ly49_N"/>
</dbReference>
<dbReference type="InterPro" id="IPR033992">
    <property type="entry name" value="NKR-like_CTLD"/>
</dbReference>
<dbReference type="InterPro" id="IPR052332">
    <property type="entry name" value="OxLDL_rcpt1-like"/>
</dbReference>
<dbReference type="PANTHER" id="PTHR47298">
    <property type="entry name" value="OXIDIZED LOW-DENSITY LIPOPROTEIN RECEPTOR 1"/>
    <property type="match status" value="1"/>
</dbReference>
<dbReference type="PANTHER" id="PTHR47298:SF1">
    <property type="entry name" value="OXIDIZED LOW-DENSITY LIPOPROTEIN RECEPTOR 1"/>
    <property type="match status" value="1"/>
</dbReference>
<dbReference type="Pfam" id="PF00059">
    <property type="entry name" value="Lectin_C"/>
    <property type="match status" value="1"/>
</dbReference>
<dbReference type="Pfam" id="PF08391">
    <property type="entry name" value="Ly49"/>
    <property type="match status" value="1"/>
</dbReference>
<dbReference type="SMART" id="SM00034">
    <property type="entry name" value="CLECT"/>
    <property type="match status" value="1"/>
</dbReference>
<dbReference type="SUPFAM" id="SSF56436">
    <property type="entry name" value="C-type lectin-like"/>
    <property type="match status" value="1"/>
</dbReference>
<dbReference type="PROSITE" id="PS50041">
    <property type="entry name" value="C_TYPE_LECTIN_2"/>
    <property type="match status" value="1"/>
</dbReference>
<keyword id="KW-0130">Cell adhesion</keyword>
<keyword id="KW-1003">Cell membrane</keyword>
<keyword id="KW-0175">Coiled coil</keyword>
<keyword id="KW-1015">Disulfide bond</keyword>
<keyword id="KW-0325">Glycoprotein</keyword>
<keyword id="KW-0391">Immunity</keyword>
<keyword id="KW-0395">Inflammatory response</keyword>
<keyword id="KW-0430">Lectin</keyword>
<keyword id="KW-0449">Lipoprotein</keyword>
<keyword id="KW-0472">Membrane</keyword>
<keyword id="KW-0564">Palmitate</keyword>
<keyword id="KW-0675">Receptor</keyword>
<keyword id="KW-1185">Reference proteome</keyword>
<keyword id="KW-0964">Secreted</keyword>
<keyword id="KW-0735">Signal-anchor</keyword>
<keyword id="KW-0812">Transmembrane</keyword>
<keyword id="KW-1133">Transmembrane helix</keyword>